<reference key="1">
    <citation type="submission" date="1998-01" db="EMBL/GenBank/DDBJ databases">
        <title>The expression of a putative membrane associated progesterone receptor component in the mouse testis and epididymis.</title>
        <authorList>
            <person name="Kwon S."/>
            <person name="Lunn R.M."/>
            <person name="O'Brien D.A."/>
            <person name="Bell D.A."/>
            <person name="Eddy E.M."/>
        </authorList>
    </citation>
    <scope>NUCLEOTIDE SEQUENCE [MRNA]</scope>
    <source>
        <strain>BALB/cJ</strain>
        <tissue>Testis</tissue>
    </source>
</reference>
<reference key="2">
    <citation type="journal article" date="2004" name="Genome Res.">
        <title>The status, quality, and expansion of the NIH full-length cDNA project: the Mammalian Gene Collection (MGC).</title>
        <authorList>
            <consortium name="The MGC Project Team"/>
        </authorList>
    </citation>
    <scope>NUCLEOTIDE SEQUENCE [LARGE SCALE MRNA]</scope>
</reference>
<reference key="3">
    <citation type="submission" date="2007-04" db="UniProtKB">
        <authorList>
            <person name="Lubec G."/>
            <person name="Kang S.U."/>
        </authorList>
    </citation>
    <scope>PROTEIN SEQUENCE OF 72-88 AND 106-119</scope>
    <scope>IDENTIFICATION BY MASS SPECTROMETRY</scope>
    <source>
        <strain>C57BL/6J</strain>
        <tissue>Brain</tissue>
    </source>
</reference>
<reference key="4">
    <citation type="journal article" date="2004" name="Rapid Commun. Mass Spectrom.">
        <title>Phosphoproteome analysis of mouse liver using immobilized metal affinity purification and linear ion trap mass spectrometry.</title>
        <authorList>
            <person name="Jin W.-H."/>
            <person name="Dai J."/>
            <person name="Zhou H."/>
            <person name="Xia Q.-C."/>
            <person name="Zou H.-F."/>
            <person name="Zeng R."/>
        </authorList>
    </citation>
    <scope>PHOSPHORYLATION AT SER-181</scope>
</reference>
<reference key="5">
    <citation type="journal article" date="2007" name="Mol. Cell. Proteomics">
        <title>Mitochondrial phosphoproteome revealed by an improved IMAC method and MS/MS/MS.</title>
        <authorList>
            <person name="Lee J."/>
            <person name="Xu Y."/>
            <person name="Chen Y."/>
            <person name="Sprung R."/>
            <person name="Kim S.C."/>
            <person name="Xie S."/>
            <person name="Zhao Y."/>
        </authorList>
    </citation>
    <scope>PHOSPHORYLATION [LARGE SCALE ANALYSIS] AT SER-181</scope>
    <scope>IDENTIFICATION BY MASS SPECTROMETRY [LARGE SCALE ANALYSIS]</scope>
    <source>
        <tissue>Liver</tissue>
    </source>
</reference>
<reference key="6">
    <citation type="journal article" date="2007" name="Proc. Natl. Acad. Sci. U.S.A.">
        <title>Large-scale phosphorylation analysis of mouse liver.</title>
        <authorList>
            <person name="Villen J."/>
            <person name="Beausoleil S.A."/>
            <person name="Gerber S.A."/>
            <person name="Gygi S.P."/>
        </authorList>
    </citation>
    <scope>PHOSPHORYLATION [LARGE SCALE ANALYSIS] AT SER-181</scope>
    <scope>IDENTIFICATION BY MASS SPECTROMETRY [LARGE SCALE ANALYSIS]</scope>
    <source>
        <tissue>Liver</tissue>
    </source>
</reference>
<reference key="7">
    <citation type="journal article" date="2008" name="J. Proteome Res.">
        <title>Specific phosphopeptide enrichment with immobilized titanium ion affinity chromatography adsorbent for phosphoproteome analysis.</title>
        <authorList>
            <person name="Zhou H."/>
            <person name="Ye M."/>
            <person name="Dong J."/>
            <person name="Han G."/>
            <person name="Jiang X."/>
            <person name="Wu R."/>
            <person name="Zou H."/>
        </authorList>
    </citation>
    <scope>PHOSPHORYLATION [LARGE SCALE ANALYSIS] AT SER-181</scope>
    <scope>IDENTIFICATION BY MASS SPECTROMETRY [LARGE SCALE ANALYSIS]</scope>
    <source>
        <tissue>Liver</tissue>
    </source>
</reference>
<reference key="8">
    <citation type="journal article" date="2009" name="Immunity">
        <title>The phagosomal proteome in interferon-gamma-activated macrophages.</title>
        <authorList>
            <person name="Trost M."/>
            <person name="English L."/>
            <person name="Lemieux S."/>
            <person name="Courcelles M."/>
            <person name="Desjardins M."/>
            <person name="Thibault P."/>
        </authorList>
    </citation>
    <scope>PHOSPHORYLATION [LARGE SCALE ANALYSIS] AT SER-181</scope>
    <scope>IDENTIFICATION BY MASS SPECTROMETRY [LARGE SCALE ANALYSIS]</scope>
</reference>
<reference key="9">
    <citation type="journal article" date="2009" name="Mol. Cell. Proteomics">
        <title>Large scale localization of protein phosphorylation by use of electron capture dissociation mass spectrometry.</title>
        <authorList>
            <person name="Sweet S.M."/>
            <person name="Bailey C.M."/>
            <person name="Cunningham D.L."/>
            <person name="Heath J.K."/>
            <person name="Cooper H.J."/>
        </authorList>
    </citation>
    <scope>PHOSPHORYLATION [LARGE SCALE ANALYSIS] AT SER-181</scope>
    <scope>IDENTIFICATION BY MASS SPECTROMETRY [LARGE SCALE ANALYSIS]</scope>
    <source>
        <tissue>Embryonic fibroblast</tissue>
    </source>
</reference>
<reference key="10">
    <citation type="journal article" date="2010" name="Cell">
        <title>A tissue-specific atlas of mouse protein phosphorylation and expression.</title>
        <authorList>
            <person name="Huttlin E.L."/>
            <person name="Jedrychowski M.P."/>
            <person name="Elias J.E."/>
            <person name="Goswami T."/>
            <person name="Rad R."/>
            <person name="Beausoleil S.A."/>
            <person name="Villen J."/>
            <person name="Haas W."/>
            <person name="Sowa M.E."/>
            <person name="Gygi S.P."/>
        </authorList>
    </citation>
    <scope>PHOSPHORYLATION [LARGE SCALE ANALYSIS] AT THR-74; SER-181 AND THR-190</scope>
    <scope>IDENTIFICATION BY MASS SPECTROMETRY [LARGE SCALE ANALYSIS]</scope>
    <source>
        <tissue>Brain</tissue>
        <tissue>Brown adipose tissue</tissue>
        <tissue>Heart</tissue>
        <tissue>Kidney</tissue>
        <tissue>Liver</tissue>
        <tissue>Lung</tissue>
        <tissue>Pancreas</tissue>
        <tissue>Spleen</tissue>
        <tissue>Testis</tissue>
    </source>
</reference>
<reference key="11">
    <citation type="journal article" date="2016" name="Biochemistry">
        <title>A Novel Role for Progesterone Receptor Membrane Component 1 (PGRMC1): A Partner and Regulator of Ferrochelatase.</title>
        <authorList>
            <person name="Piel R.B. III"/>
            <person name="Shiferaw M.T."/>
            <person name="Vashisht A.A."/>
            <person name="Marcero J.R."/>
            <person name="Praissman J.L."/>
            <person name="Phillips J.D."/>
            <person name="Wohlschlegel J.A."/>
            <person name="Medlock A.E."/>
        </authorList>
    </citation>
    <scope>INTERACTION WITH FECH</scope>
    <scope>SUBCELLULAR LOCATION</scope>
    <scope>FUNCTION</scope>
</reference>
<reference key="12">
    <citation type="journal article" date="2017" name="Endocrinology">
        <title>Conditional Ablation of Progesterone Receptor Membrane Component 2 Causes Female Premature Reproductive Senescence.</title>
        <authorList>
            <person name="Clark N.C."/>
            <person name="Pru C.A."/>
            <person name="Yee S.P."/>
            <person name="Lydon J.P."/>
            <person name="Peluso J.J."/>
            <person name="Pru J.K."/>
        </authorList>
    </citation>
    <scope>DISRUPTION PHENOTYPE</scope>
    <scope>FUNCTION</scope>
</reference>
<reference key="13">
    <citation type="journal article" date="2019" name="Nature">
        <title>PGRMC2 is an intracellular haem chaperone critical for adipocyte function.</title>
        <authorList>
            <person name="Galmozzi A."/>
            <person name="Kok B.P."/>
            <person name="Kim A.S."/>
            <person name="Montenegro-Burke J.R."/>
            <person name="Lee J.Y."/>
            <person name="Spreafico R."/>
            <person name="Mosure S."/>
            <person name="Albert V."/>
            <person name="Cintron-Colon R."/>
            <person name="Godio C."/>
            <person name="Webb W.R."/>
            <person name="Conti B."/>
            <person name="Solt L.A."/>
            <person name="Kojetin D."/>
            <person name="Parker C.G."/>
            <person name="Peluso J.J."/>
            <person name="Pru J.K."/>
            <person name="Siuzdak G."/>
            <person name="Cravatt B.F."/>
            <person name="Saez E."/>
        </authorList>
    </citation>
    <scope>INTERACTION WITH PGRMC2</scope>
</reference>
<protein>
    <recommendedName>
        <fullName>Membrane-associated progesterone receptor component 1</fullName>
        <shortName evidence="2">mPR</shortName>
    </recommendedName>
</protein>
<comment type="function">
    <text evidence="2 7 8">Component of a progesterone-binding protein complex. Binds progesterone. Has many reported cellular functions (heme homeostasis, interaction with CYPs). Required for the maintenance of uterine histoarchitecture and normal female reproductive lifespan (PubMed:28005395). Intracellular heme chaperone. Regulates heme synthesis via interactions with FECH and acts as a heme donor for at least some hemoproteins (PubMed:27599036). Forms a ternary complex with TMEM97 receptor and low density lipid receptor/LDLR, which increases LDLR-mediated LDL lipoprotein internalization (By similarity).</text>
</comment>
<comment type="subunit">
    <text evidence="2 7 9">Homodimer. Forms stable homodimer through hydrophobic heme-heme stacking interactions. Interacts with PGRMC2 (PubMed:31748741). Interacts with FECH; the interaction results in decreased FECH activity (PubMed:27599036). Interacts with EGFR, CYP1A1 and CYP3A4; the interactions require PGRMC1 homodimerization (By similarity). Interacts with TMEM97 and LDLR; the interaction increases LDL internalization (By similarity).</text>
</comment>
<comment type="subcellular location">
    <subcellularLocation>
        <location evidence="3">Microsome membrane</location>
        <topology evidence="4">Single-pass membrane protein</topology>
    </subcellularLocation>
    <subcellularLocation>
        <location evidence="2">Endoplasmic reticulum membrane</location>
        <topology evidence="4">Single-pass membrane protein</topology>
    </subcellularLocation>
    <subcellularLocation>
        <location evidence="7">Mitochondrion outer membrane</location>
        <topology evidence="10">Single-pass membrane protein</topology>
        <orientation evidence="7">Extracellular side</orientation>
    </subcellularLocation>
    <subcellularLocation>
        <location evidence="2">Secreted</location>
    </subcellularLocation>
</comment>
<comment type="domain">
    <text evidence="1">The cytochrome b5 heme-binding domain lacks the conserved iron-binding His residues at positions 107 and 131.</text>
</comment>
<comment type="PTM">
    <text evidence="2">O-glycosylated; contains chondroitin sulfate attached to Ser-54. Ser-54 is in the cytoplasmic domain but the glycosylated form was detected in urine, suggesting that the membrane-bound form is cleaved, allowing for production of a secreted form which is glycosylated.</text>
</comment>
<comment type="disruption phenotype">
    <text evidence="8">Double conditional knockout for PGRMC1 and PGRMC2 from female reproductive tissues results in postimplantation embryonic death leading to subfertility, with female mice producing fewer pups/litter than wild-types. They undergo premature reproductive senescence, producing fewer litters overall during the trial compared with wild-types.</text>
</comment>
<comment type="miscellaneous">
    <text evidence="2">Non-classical progesterone receptors involved in extranuclear signaling are classified in 2 groups: the class II progestin and adipoQ receptor (PAQR) family (also called mPRs) (PAQR5, PAQR6, PAQR7, PAQR8 and PAQR9) and the b5-like heme/steroid-binding protein family (also called MAPRs) (PGRMC1, PGRMC2, NENF and CYB5D2).</text>
</comment>
<comment type="similarity">
    <text evidence="10">Belongs to the cytochrome b5 family. MAPR subfamily.</text>
</comment>
<keyword id="KW-0903">Direct protein sequencing</keyword>
<keyword id="KW-0256">Endoplasmic reticulum</keyword>
<keyword id="KW-0325">Glycoprotein</keyword>
<keyword id="KW-0408">Iron</keyword>
<keyword id="KW-0446">Lipid-binding</keyword>
<keyword id="KW-0472">Membrane</keyword>
<keyword id="KW-0479">Metal-binding</keyword>
<keyword id="KW-0492">Microsome</keyword>
<keyword id="KW-0496">Mitochondrion</keyword>
<keyword id="KW-1000">Mitochondrion outer membrane</keyword>
<keyword id="KW-0597">Phosphoprotein</keyword>
<keyword id="KW-0654">Proteoglycan</keyword>
<keyword id="KW-0675">Receptor</keyword>
<keyword id="KW-1185">Reference proteome</keyword>
<keyword id="KW-0964">Secreted</keyword>
<keyword id="KW-0754">Steroid-binding</keyword>
<keyword id="KW-0812">Transmembrane</keyword>
<keyword id="KW-1133">Transmembrane helix</keyword>
<dbReference type="EMBL" id="AF042491">
    <property type="protein sequence ID" value="AAB97466.1"/>
    <property type="molecule type" value="mRNA"/>
</dbReference>
<dbReference type="EMBL" id="BC006016">
    <property type="protein sequence ID" value="AAH06016.1"/>
    <property type="molecule type" value="mRNA"/>
</dbReference>
<dbReference type="CCDS" id="CCDS30060.1"/>
<dbReference type="RefSeq" id="NP_058063.2">
    <property type="nucleotide sequence ID" value="NM_016783.4"/>
</dbReference>
<dbReference type="SMR" id="O55022"/>
<dbReference type="BioGRID" id="207289">
    <property type="interactions" value="13"/>
</dbReference>
<dbReference type="FunCoup" id="O55022">
    <property type="interactions" value="2198"/>
</dbReference>
<dbReference type="IntAct" id="O55022">
    <property type="interactions" value="10"/>
</dbReference>
<dbReference type="STRING" id="10090.ENSMUSP00000073061"/>
<dbReference type="GlyGen" id="O55022">
    <property type="glycosylation" value="1 site, 1 O-linked glycan (1 site)"/>
</dbReference>
<dbReference type="iPTMnet" id="O55022"/>
<dbReference type="PhosphoSitePlus" id="O55022"/>
<dbReference type="SwissPalm" id="O55022"/>
<dbReference type="jPOST" id="O55022"/>
<dbReference type="PaxDb" id="10090-ENSMUSP00000073061"/>
<dbReference type="PeptideAtlas" id="O55022"/>
<dbReference type="ProteomicsDB" id="288186"/>
<dbReference type="Pumba" id="O55022"/>
<dbReference type="Antibodypedia" id="497">
    <property type="antibodies" value="208 antibodies from 36 providers"/>
</dbReference>
<dbReference type="DNASU" id="53328"/>
<dbReference type="Ensembl" id="ENSMUST00000073339.7">
    <property type="protein sequence ID" value="ENSMUSP00000073061.7"/>
    <property type="gene ID" value="ENSMUSG00000006373.11"/>
</dbReference>
<dbReference type="GeneID" id="53328"/>
<dbReference type="KEGG" id="mmu:53328"/>
<dbReference type="UCSC" id="uc009sxo.1">
    <property type="organism name" value="mouse"/>
</dbReference>
<dbReference type="AGR" id="MGI:1858305"/>
<dbReference type="CTD" id="10857"/>
<dbReference type="MGI" id="MGI:1858305">
    <property type="gene designation" value="Pgrmc1"/>
</dbReference>
<dbReference type="VEuPathDB" id="HostDB:ENSMUSG00000006373"/>
<dbReference type="eggNOG" id="KOG1110">
    <property type="taxonomic scope" value="Eukaryota"/>
</dbReference>
<dbReference type="GeneTree" id="ENSGT00940000160619"/>
<dbReference type="HOGENOM" id="CLU_042860_1_0_1"/>
<dbReference type="InParanoid" id="O55022"/>
<dbReference type="OMA" id="ANEWETQ"/>
<dbReference type="OrthoDB" id="547796at2759"/>
<dbReference type="PhylomeDB" id="O55022"/>
<dbReference type="TreeFam" id="TF314562"/>
<dbReference type="Reactome" id="R-MMU-6798695">
    <property type="pathway name" value="Neutrophil degranulation"/>
</dbReference>
<dbReference type="BioGRID-ORCS" id="53328">
    <property type="hits" value="2 hits in 78 CRISPR screens"/>
</dbReference>
<dbReference type="ChiTaRS" id="Pgrmc1">
    <property type="organism name" value="mouse"/>
</dbReference>
<dbReference type="PRO" id="PR:O55022"/>
<dbReference type="Proteomes" id="UP000000589">
    <property type="component" value="Chromosome X"/>
</dbReference>
<dbReference type="RNAct" id="O55022">
    <property type="molecule type" value="protein"/>
</dbReference>
<dbReference type="Bgee" id="ENSMUSG00000006373">
    <property type="expression patterns" value="Expressed in olfactory epithelium and 284 other cell types or tissues"/>
</dbReference>
<dbReference type="ExpressionAtlas" id="O55022">
    <property type="expression patterns" value="baseline and differential"/>
</dbReference>
<dbReference type="GO" id="GO:0005789">
    <property type="term" value="C:endoplasmic reticulum membrane"/>
    <property type="evidence" value="ECO:0007669"/>
    <property type="project" value="UniProtKB-SubCell"/>
</dbReference>
<dbReference type="GO" id="GO:0005576">
    <property type="term" value="C:extracellular region"/>
    <property type="evidence" value="ECO:0007669"/>
    <property type="project" value="UniProtKB-SubCell"/>
</dbReference>
<dbReference type="GO" id="GO:0005741">
    <property type="term" value="C:mitochondrial outer membrane"/>
    <property type="evidence" value="ECO:0000314"/>
    <property type="project" value="UniProtKB"/>
</dbReference>
<dbReference type="GO" id="GO:0043005">
    <property type="term" value="C:neuron projection"/>
    <property type="evidence" value="ECO:0007669"/>
    <property type="project" value="Ensembl"/>
</dbReference>
<dbReference type="GO" id="GO:0043025">
    <property type="term" value="C:neuronal cell body"/>
    <property type="evidence" value="ECO:0007669"/>
    <property type="project" value="Ensembl"/>
</dbReference>
<dbReference type="GO" id="GO:0045202">
    <property type="term" value="C:synapse"/>
    <property type="evidence" value="ECO:0007669"/>
    <property type="project" value="Ensembl"/>
</dbReference>
<dbReference type="GO" id="GO:0020037">
    <property type="term" value="F:heme binding"/>
    <property type="evidence" value="ECO:0000314"/>
    <property type="project" value="UniProtKB"/>
</dbReference>
<dbReference type="GO" id="GO:0046872">
    <property type="term" value="F:metal ion binding"/>
    <property type="evidence" value="ECO:0007669"/>
    <property type="project" value="UniProtKB-KW"/>
</dbReference>
<dbReference type="GO" id="GO:0042803">
    <property type="term" value="F:protein homodimerization activity"/>
    <property type="evidence" value="ECO:0000250"/>
    <property type="project" value="UniProtKB"/>
</dbReference>
<dbReference type="GO" id="GO:0005496">
    <property type="term" value="F:steroid binding"/>
    <property type="evidence" value="ECO:0007669"/>
    <property type="project" value="UniProtKB-KW"/>
</dbReference>
<dbReference type="GO" id="GO:0008306">
    <property type="term" value="P:associative learning"/>
    <property type="evidence" value="ECO:0007669"/>
    <property type="project" value="Ensembl"/>
</dbReference>
<dbReference type="GO" id="GO:0007411">
    <property type="term" value="P:axon guidance"/>
    <property type="evidence" value="ECO:0007669"/>
    <property type="project" value="Ensembl"/>
</dbReference>
<dbReference type="GO" id="GO:0006783">
    <property type="term" value="P:heme biosynthetic process"/>
    <property type="evidence" value="ECO:0000250"/>
    <property type="project" value="UniProtKB"/>
</dbReference>
<dbReference type="GO" id="GO:0007613">
    <property type="term" value="P:memory"/>
    <property type="evidence" value="ECO:0007669"/>
    <property type="project" value="Ensembl"/>
</dbReference>
<dbReference type="GO" id="GO:0099563">
    <property type="term" value="P:modification of synaptic structure"/>
    <property type="evidence" value="ECO:0007669"/>
    <property type="project" value="Ensembl"/>
</dbReference>
<dbReference type="GO" id="GO:1905809">
    <property type="term" value="P:negative regulation of synapse organization"/>
    <property type="evidence" value="ECO:0007669"/>
    <property type="project" value="Ensembl"/>
</dbReference>
<dbReference type="GO" id="GO:0140077">
    <property type="term" value="P:positive regulation of lipoprotein transport"/>
    <property type="evidence" value="ECO:0000250"/>
    <property type="project" value="UniProtKB"/>
</dbReference>
<dbReference type="GO" id="GO:1903078">
    <property type="term" value="P:positive regulation of protein localization to plasma membrane"/>
    <property type="evidence" value="ECO:0007669"/>
    <property type="project" value="Ensembl"/>
</dbReference>
<dbReference type="FunFam" id="3.10.120.10:FF:000003">
    <property type="entry name" value="membrane-associated progesterone receptor component 1"/>
    <property type="match status" value="1"/>
</dbReference>
<dbReference type="Gene3D" id="3.10.120.10">
    <property type="entry name" value="Cytochrome b5-like heme/steroid binding domain"/>
    <property type="match status" value="1"/>
</dbReference>
<dbReference type="InterPro" id="IPR001199">
    <property type="entry name" value="Cyt_B5-like_heme/steroid-bd"/>
</dbReference>
<dbReference type="InterPro" id="IPR036400">
    <property type="entry name" value="Cyt_B5-like_heme/steroid_sf"/>
</dbReference>
<dbReference type="InterPro" id="IPR050577">
    <property type="entry name" value="MAPR/NEUFC/NENF-like"/>
</dbReference>
<dbReference type="PANTHER" id="PTHR10281:SF23">
    <property type="entry name" value="MEMBRANE-ASSOCIATED PROGESTERONE RECEPTOR COMPONENT 1"/>
    <property type="match status" value="1"/>
</dbReference>
<dbReference type="PANTHER" id="PTHR10281">
    <property type="entry name" value="MEMBRANE-ASSOCIATED PROGESTERONE RECEPTOR COMPONENT-RELATED"/>
    <property type="match status" value="1"/>
</dbReference>
<dbReference type="Pfam" id="PF00173">
    <property type="entry name" value="Cyt-b5"/>
    <property type="match status" value="1"/>
</dbReference>
<dbReference type="SMART" id="SM01117">
    <property type="entry name" value="Cyt-b5"/>
    <property type="match status" value="1"/>
</dbReference>
<dbReference type="SUPFAM" id="SSF55856">
    <property type="entry name" value="Cytochrome b5-like heme/steroid binding domain"/>
    <property type="match status" value="1"/>
</dbReference>
<sequence>MAAEDVVATGADPSELEGGGLLHEIFTSPLNLLLLGLCIFLLYKIVRGDQPGASGDNDDDEPPPLPRLKRRDFTPAELRRFDGVQDPRILMAINGKVFDVTKGRKFYGPEGPYGVFAGRDASRGLATFCLDKEALKDEYDDLSDLTPAQQETLSDWDSQFTFKYHHVGKLLKEGEEPTVYSDDEEPKDETARKNE</sequence>
<gene>
    <name evidence="11" type="primary">Pgrmc1</name>
    <name type="synonym">Pgrmc</name>
</gene>
<accession>O55022</accession>
<accession>Q99JN0</accession>
<proteinExistence type="evidence at protein level"/>
<name>PGRC1_MOUSE</name>
<organism>
    <name type="scientific">Mus musculus</name>
    <name type="common">Mouse</name>
    <dbReference type="NCBI Taxonomy" id="10090"/>
    <lineage>
        <taxon>Eukaryota</taxon>
        <taxon>Metazoa</taxon>
        <taxon>Chordata</taxon>
        <taxon>Craniata</taxon>
        <taxon>Vertebrata</taxon>
        <taxon>Euteleostomi</taxon>
        <taxon>Mammalia</taxon>
        <taxon>Eutheria</taxon>
        <taxon>Euarchontoglires</taxon>
        <taxon>Glires</taxon>
        <taxon>Rodentia</taxon>
        <taxon>Myomorpha</taxon>
        <taxon>Muroidea</taxon>
        <taxon>Muridae</taxon>
        <taxon>Murinae</taxon>
        <taxon>Mus</taxon>
        <taxon>Mus</taxon>
    </lineage>
</organism>
<feature type="chain" id="PRO_0000121740" description="Membrane-associated progesterone receptor component 1">
    <location>
        <begin position="1"/>
        <end position="195"/>
    </location>
</feature>
<feature type="topological domain" description="Lumenal" evidence="4">
    <location>
        <begin position="1"/>
        <end position="24"/>
    </location>
</feature>
<feature type="transmembrane region" description="Helical" evidence="4">
    <location>
        <begin position="25"/>
        <end position="43"/>
    </location>
</feature>
<feature type="topological domain" description="Cytoplasmic" evidence="4">
    <location>
        <begin position="44"/>
        <end position="195"/>
    </location>
</feature>
<feature type="domain" description="Cytochrome b5 heme-binding">
    <location>
        <begin position="72"/>
        <end position="171"/>
    </location>
</feature>
<feature type="region of interest" description="Disordered" evidence="5">
    <location>
        <begin position="173"/>
        <end position="195"/>
    </location>
</feature>
<feature type="binding site" description="axial binding residue" evidence="2">
    <location>
        <position position="113"/>
    </location>
    <ligand>
        <name>heme</name>
        <dbReference type="ChEBI" id="CHEBI:30413"/>
    </ligand>
    <ligandPart>
        <name>Fe</name>
        <dbReference type="ChEBI" id="CHEBI:18248"/>
    </ligandPart>
</feature>
<feature type="modified residue" description="Phosphoserine" evidence="2">
    <location>
        <position position="54"/>
    </location>
</feature>
<feature type="modified residue" description="Phosphothreonine" evidence="17">
    <location>
        <position position="74"/>
    </location>
</feature>
<feature type="modified residue" description="Phosphoserine" evidence="6 12 13 14 15 16 17">
    <location>
        <position position="181"/>
    </location>
</feature>
<feature type="modified residue" description="Phosphothreonine" evidence="17">
    <location>
        <position position="190"/>
    </location>
</feature>
<feature type="sequence conflict" description="In Ref. 1; AAB97466." evidence="10" ref="1">
    <original>P</original>
    <variation>S</variation>
    <location>
        <position position="87"/>
    </location>
</feature>
<evidence type="ECO:0000250" key="1"/>
<evidence type="ECO:0000250" key="2">
    <source>
        <dbReference type="UniProtKB" id="O00264"/>
    </source>
</evidence>
<evidence type="ECO:0000250" key="3">
    <source>
        <dbReference type="UniProtKB" id="Q95250"/>
    </source>
</evidence>
<evidence type="ECO:0000255" key="4"/>
<evidence type="ECO:0000256" key="5">
    <source>
        <dbReference type="SAM" id="MobiDB-lite"/>
    </source>
</evidence>
<evidence type="ECO:0000269" key="6">
    <source>
    </source>
</evidence>
<evidence type="ECO:0000269" key="7">
    <source>
    </source>
</evidence>
<evidence type="ECO:0000269" key="8">
    <source>
    </source>
</evidence>
<evidence type="ECO:0000269" key="9">
    <source>
    </source>
</evidence>
<evidence type="ECO:0000305" key="10"/>
<evidence type="ECO:0000312" key="11">
    <source>
        <dbReference type="MGI" id="MGI:1858305"/>
    </source>
</evidence>
<evidence type="ECO:0007744" key="12">
    <source>
    </source>
</evidence>
<evidence type="ECO:0007744" key="13">
    <source>
    </source>
</evidence>
<evidence type="ECO:0007744" key="14">
    <source>
    </source>
</evidence>
<evidence type="ECO:0007744" key="15">
    <source>
    </source>
</evidence>
<evidence type="ECO:0007744" key="16">
    <source>
    </source>
</evidence>
<evidence type="ECO:0007744" key="17">
    <source>
    </source>
</evidence>